<sequence>MVTLKMAIIFLMEQIRTPFSLIWTIMSPTVLFFFLHFNEIELHYGDTAWLGKQISWFVGYISFSVVLFNYCLYLVGRRESGFIATFVHNMDGRLLFIRSQLIASLIMSILYVFFFILVVLTGFQASPDYQIVMIILKSIYINAFMMVSLTFMASFRVTFQTASTIYSVLITVCMVSGIVSLKYNEGIVYWINQVNPIAIYSTILQSDQELSLMTIFFYSIMLIISIISALTFKTEPVWSSQ</sequence>
<feature type="chain" id="PRO_0000068574" description="Protein McbE">
    <location>
        <begin position="1"/>
        <end position="241"/>
    </location>
</feature>
<feature type="transmembrane region" description="Helical" evidence="1">
    <location>
        <begin position="17"/>
        <end position="35"/>
    </location>
</feature>
<feature type="transmembrane region" description="Helical" evidence="1">
    <location>
        <begin position="54"/>
        <end position="72"/>
    </location>
</feature>
<feature type="transmembrane region" description="Helical" evidence="1">
    <location>
        <begin position="105"/>
        <end position="123"/>
    </location>
</feature>
<feature type="transmembrane region" description="Helical" evidence="1">
    <location>
        <begin position="131"/>
        <end position="149"/>
    </location>
</feature>
<feature type="transmembrane region" description="Helical" evidence="1">
    <location>
        <begin position="163"/>
        <end position="181"/>
    </location>
</feature>
<feature type="transmembrane region" description="Helical" evidence="1">
    <location>
        <begin position="212"/>
        <end position="230"/>
    </location>
</feature>
<name>MCBE_ECOLX</name>
<organism>
    <name type="scientific">Escherichia coli</name>
    <dbReference type="NCBI Taxonomy" id="562"/>
    <lineage>
        <taxon>Bacteria</taxon>
        <taxon>Pseudomonadati</taxon>
        <taxon>Pseudomonadota</taxon>
        <taxon>Gammaproteobacteria</taxon>
        <taxon>Enterobacterales</taxon>
        <taxon>Enterobacteriaceae</taxon>
        <taxon>Escherichia</taxon>
    </lineage>
</organism>
<geneLocation type="plasmid">
    <name>IncFII pMccB17</name>
</geneLocation>
<proteinExistence type="predicted"/>
<gene>
    <name type="primary">mcbE</name>
</gene>
<reference key="1">
    <citation type="journal article" date="1988" name="EMBO J.">
        <title>The export of the DNA replication inhibitor microcin B17 provides immunity for the host cell.</title>
        <authorList>
            <person name="Garrido M.D.C."/>
            <person name="Herrero M."/>
            <person name="Kolter R."/>
            <person name="Moreno F."/>
        </authorList>
    </citation>
    <scope>NUCLEOTIDE SEQUENCE [GENOMIC DNA]</scope>
</reference>
<reference key="2">
    <citation type="journal article" date="1989" name="J. Bacteriol.">
        <title>DNA sequence, products, and transcriptional pattern of the genes involved in production of the DNA replication inhibitor microcin B17.</title>
        <authorList>
            <person name="Genilloud O."/>
            <person name="Moreno F."/>
            <person name="Kolter R."/>
        </authorList>
    </citation>
    <scope>NUCLEOTIDE SEQUENCE [GENOMIC DNA] OF 1-93</scope>
</reference>
<evidence type="ECO:0000255" key="1"/>
<dbReference type="EMBL" id="X07875">
    <property type="protein sequence ID" value="CAA30722.1"/>
    <property type="molecule type" value="Genomic_DNA"/>
</dbReference>
<dbReference type="EMBL" id="M24253">
    <property type="protein sequence ID" value="AAA72745.1"/>
    <property type="molecule type" value="Genomic_DNA"/>
</dbReference>
<dbReference type="PIR" id="S00836">
    <property type="entry name" value="S00836"/>
</dbReference>
<dbReference type="RefSeq" id="WP_000258040.1">
    <property type="nucleotide sequence ID" value="NZ_WSWV01000078.1"/>
</dbReference>
<dbReference type="TCDB" id="3.A.1.116.1">
    <property type="family name" value="the atp-binding cassette (abc) superfamily"/>
</dbReference>
<dbReference type="BioCyc" id="MetaCyc:MONOMER-21089"/>
<dbReference type="GO" id="GO:0005886">
    <property type="term" value="C:plasma membrane"/>
    <property type="evidence" value="ECO:0007669"/>
    <property type="project" value="UniProtKB-SubCell"/>
</dbReference>
<dbReference type="GO" id="GO:0046677">
    <property type="term" value="P:response to antibiotic"/>
    <property type="evidence" value="ECO:0007669"/>
    <property type="project" value="UniProtKB-KW"/>
</dbReference>
<comment type="function">
    <text>Together with two further proteins McbF and McbG this protein causes immunity to the peptide antibiotic microcin B17 (MccB17), which inhibits DNA replication in enterobacteriaceae. Immunity is determined by two different mechanisms. McbE is involved in the production of extracellular MccB17 and, in a complex with McbF it also serves as 'pump' for the export of active MccB17 from the cytoplasm to the periplasmic space.</text>
</comment>
<comment type="subcellular location">
    <subcellularLocation>
        <location>Cell membrane</location>
        <topology>Multi-pass membrane protein</topology>
    </subcellularLocation>
</comment>
<keyword id="KW-0046">Antibiotic resistance</keyword>
<keyword id="KW-1003">Cell membrane</keyword>
<keyword id="KW-0472">Membrane</keyword>
<keyword id="KW-0614">Plasmid</keyword>
<keyword id="KW-0812">Transmembrane</keyword>
<keyword id="KW-1133">Transmembrane helix</keyword>
<keyword id="KW-0813">Transport</keyword>
<protein>
    <recommendedName>
        <fullName>Protein McbE</fullName>
    </recommendedName>
</protein>
<accession>P05528</accession>